<accession>O03062</accession>
<reference key="1">
    <citation type="journal article" date="1997" name="Am. J. Bot.">
        <title>Evaluation of atpB nucleotide sequences for phylogenetic studies of ferns and other pteridophytes.</title>
        <authorList>
            <person name="Wolf P.G."/>
        </authorList>
    </citation>
    <scope>NUCLEOTIDE SEQUENCE [GENOMIC DNA]</scope>
</reference>
<reference key="2">
    <citation type="journal article" date="2003" name="DNA Res.">
        <title>Complete nucleotide sequence of the chloroplast genome from a leptosporangiate fern, Adiantum capillus-veneris L.</title>
        <authorList>
            <person name="Wolf P.G."/>
            <person name="Rowe C.A."/>
            <person name="Sinclair R.B."/>
            <person name="Hasebe M."/>
        </authorList>
    </citation>
    <scope>NUCLEOTIDE SEQUENCE [LARGE SCALE GENOMIC DNA]</scope>
    <scope>SEQUENCE REVISION</scope>
</reference>
<reference key="3">
    <citation type="journal article" date="2004" name="Gene">
        <title>High levels of RNA editing in a vascular plant chloroplast genome: analysis of transcripts from the fern Adiantum capillus-veneris.</title>
        <authorList>
            <person name="Wolf P.G."/>
            <person name="Rowe C.A."/>
            <person name="Hasebe M."/>
        </authorList>
    </citation>
    <scope>NUCLEOTIDE SEQUENCE [GENOMIC DNA]</scope>
    <scope>RNA EDITING</scope>
    <source>
        <tissue>Frond</tissue>
    </source>
</reference>
<name>ATPB_ADICA</name>
<comment type="function">
    <text evidence="1">Produces ATP from ADP in the presence of a proton gradient across the membrane. The catalytic sites are hosted primarily by the beta subunits.</text>
</comment>
<comment type="catalytic activity">
    <reaction evidence="1">
        <text>ATP + H2O + 4 H(+)(in) = ADP + phosphate + 5 H(+)(out)</text>
        <dbReference type="Rhea" id="RHEA:57720"/>
        <dbReference type="ChEBI" id="CHEBI:15377"/>
        <dbReference type="ChEBI" id="CHEBI:15378"/>
        <dbReference type="ChEBI" id="CHEBI:30616"/>
        <dbReference type="ChEBI" id="CHEBI:43474"/>
        <dbReference type="ChEBI" id="CHEBI:456216"/>
        <dbReference type="EC" id="7.1.2.2"/>
    </reaction>
</comment>
<comment type="subunit">
    <text evidence="1">F-type ATPases have 2 components, CF(1) - the catalytic core - and CF(0) - the membrane proton channel. CF(1) has five subunits: alpha(3), beta(3), gamma(1), delta(1), epsilon(1). CF(0) has four main subunits: a(1), b(1), b'(1) and c(9-12).</text>
</comment>
<comment type="subcellular location">
    <subcellularLocation>
        <location evidence="1">Plastid</location>
        <location evidence="1">Chloroplast thylakoid membrane</location>
        <topology evidence="1">Peripheral membrane protein</topology>
    </subcellularLocation>
</comment>
<comment type="RNA editing">
    <location>
        <position position="6" evidence="2"/>
    </location>
    <location>
        <position position="77" evidence="2"/>
    </location>
    <location>
        <position position="181" evidence="2"/>
    </location>
    <location>
        <position position="183" evidence="2"/>
    </location>
    <location>
        <position position="214" evidence="2"/>
    </location>
    <location>
        <position position="249" evidence="2"/>
    </location>
    <location>
        <position position="461" evidence="2"/>
    </location>
</comment>
<comment type="similarity">
    <text evidence="1">Belongs to the ATPase alpha/beta chains family.</text>
</comment>
<sequence length="493" mass="53026">MKISSLLFEISELVEKNVGYITQIIGPVLDVAFSPGEMPSIYNSLVVKGRNSAGQEINVTCEVQQLLGNNEVRAVAMSATDGLMRGMGAVDTGAPLSVPVGETTLGRIFNVLGEPVDNLGPVQNSATFPIHRSAPAFTQLDTKLSIFETGIKVVDLLAPYRRGGKIGLFGGAGVGKTVLIMELINNIAKAHGGVSVFGGVGERTREGNDLYMEMKESKVINEQNISESKVALVYGQMNEPPGARMRVGLTALTMAEYFRDINKRDVLLFIDNIFRFVQAGSEVSALLGRMPSAVGYQPTLGTEMGSLQERITSTKEGSITSIQAVYVPADDLTDPAPATTFAHLDATTVLSRGLAAKGIYPAVDPLDSTSTMLQPWIVGEEHYETAQGVKQTLQRYKELQDIIAILGLDELSEEDRLTVARARKIERFLSQPFFVAEVFTGSPGKYVSLPETIKGFQMILSGELDNLPEQAFYLVGNIDEAAAKAAALQAGGQ</sequence>
<organism>
    <name type="scientific">Adiantum capillus-veneris</name>
    <name type="common">Maidenhair fern</name>
    <dbReference type="NCBI Taxonomy" id="13818"/>
    <lineage>
        <taxon>Eukaryota</taxon>
        <taxon>Viridiplantae</taxon>
        <taxon>Streptophyta</taxon>
        <taxon>Embryophyta</taxon>
        <taxon>Tracheophyta</taxon>
        <taxon>Polypodiopsida</taxon>
        <taxon>Polypodiidae</taxon>
        <taxon>Polypodiales</taxon>
        <taxon>Pteridineae</taxon>
        <taxon>Pteridaceae</taxon>
        <taxon>Vittarioideae</taxon>
        <taxon>Adiantum</taxon>
    </lineage>
</organism>
<proteinExistence type="evidence at transcript level"/>
<protein>
    <recommendedName>
        <fullName evidence="1">ATP synthase subunit beta, chloroplastic</fullName>
        <ecNumber evidence="1">7.1.2.2</ecNumber>
    </recommendedName>
    <alternativeName>
        <fullName evidence="1">ATP synthase F1 sector subunit beta</fullName>
    </alternativeName>
    <alternativeName>
        <fullName evidence="1">F-ATPase subunit beta</fullName>
    </alternativeName>
</protein>
<keyword id="KW-0066">ATP synthesis</keyword>
<keyword id="KW-0067">ATP-binding</keyword>
<keyword id="KW-0139">CF(1)</keyword>
<keyword id="KW-0150">Chloroplast</keyword>
<keyword id="KW-0375">Hydrogen ion transport</keyword>
<keyword id="KW-0406">Ion transport</keyword>
<keyword id="KW-0472">Membrane</keyword>
<keyword id="KW-0547">Nucleotide-binding</keyword>
<keyword id="KW-0934">Plastid</keyword>
<keyword id="KW-0691">RNA editing</keyword>
<keyword id="KW-0793">Thylakoid</keyword>
<keyword id="KW-1278">Translocase</keyword>
<keyword id="KW-0813">Transport</keyword>
<geneLocation type="chloroplast"/>
<gene>
    <name evidence="1" type="primary">atpB</name>
</gene>
<evidence type="ECO:0000255" key="1">
    <source>
        <dbReference type="HAMAP-Rule" id="MF_01347"/>
    </source>
</evidence>
<evidence type="ECO:0000269" key="2">
    <source>
    </source>
</evidence>
<feature type="chain" id="PRO_0000144490" description="ATP synthase subunit beta, chloroplastic">
    <location>
        <begin position="1"/>
        <end position="493"/>
    </location>
</feature>
<feature type="binding site" evidence="1">
    <location>
        <begin position="170"/>
        <end position="177"/>
    </location>
    <ligand>
        <name>ATP</name>
        <dbReference type="ChEBI" id="CHEBI:30616"/>
    </ligand>
</feature>
<dbReference type="EC" id="7.1.2.2" evidence="1"/>
<dbReference type="EMBL" id="AY178864">
    <property type="protein sequence ID" value="AAB51749.3"/>
    <property type="molecule type" value="Genomic_DNA"/>
</dbReference>
<dbReference type="RefSeq" id="NP_848067.2">
    <property type="nucleotide sequence ID" value="NC_004766.1"/>
</dbReference>
<dbReference type="SMR" id="O03062"/>
<dbReference type="GeneID" id="807342"/>
<dbReference type="GO" id="GO:0009535">
    <property type="term" value="C:chloroplast thylakoid membrane"/>
    <property type="evidence" value="ECO:0007669"/>
    <property type="project" value="UniProtKB-SubCell"/>
</dbReference>
<dbReference type="GO" id="GO:0005739">
    <property type="term" value="C:mitochondrion"/>
    <property type="evidence" value="ECO:0007669"/>
    <property type="project" value="GOC"/>
</dbReference>
<dbReference type="GO" id="GO:0045259">
    <property type="term" value="C:proton-transporting ATP synthase complex"/>
    <property type="evidence" value="ECO:0007669"/>
    <property type="project" value="UniProtKB-KW"/>
</dbReference>
<dbReference type="GO" id="GO:0005524">
    <property type="term" value="F:ATP binding"/>
    <property type="evidence" value="ECO:0007669"/>
    <property type="project" value="UniProtKB-UniRule"/>
</dbReference>
<dbReference type="GO" id="GO:0016887">
    <property type="term" value="F:ATP hydrolysis activity"/>
    <property type="evidence" value="ECO:0007669"/>
    <property type="project" value="InterPro"/>
</dbReference>
<dbReference type="GO" id="GO:0046933">
    <property type="term" value="F:proton-transporting ATP synthase activity, rotational mechanism"/>
    <property type="evidence" value="ECO:0007669"/>
    <property type="project" value="UniProtKB-UniRule"/>
</dbReference>
<dbReference type="GO" id="GO:0042776">
    <property type="term" value="P:proton motive force-driven mitochondrial ATP synthesis"/>
    <property type="evidence" value="ECO:0007669"/>
    <property type="project" value="TreeGrafter"/>
</dbReference>
<dbReference type="CDD" id="cd18110">
    <property type="entry name" value="ATP-synt_F1_beta_C"/>
    <property type="match status" value="1"/>
</dbReference>
<dbReference type="CDD" id="cd18115">
    <property type="entry name" value="ATP-synt_F1_beta_N"/>
    <property type="match status" value="1"/>
</dbReference>
<dbReference type="CDD" id="cd01133">
    <property type="entry name" value="F1-ATPase_beta_CD"/>
    <property type="match status" value="1"/>
</dbReference>
<dbReference type="FunFam" id="1.10.1140.10:FF:000001">
    <property type="entry name" value="ATP synthase subunit beta"/>
    <property type="match status" value="1"/>
</dbReference>
<dbReference type="FunFam" id="3.40.50.12240:FF:000006">
    <property type="entry name" value="ATP synthase subunit beta"/>
    <property type="match status" value="1"/>
</dbReference>
<dbReference type="FunFam" id="3.40.50.300:FF:000004">
    <property type="entry name" value="ATP synthase subunit beta"/>
    <property type="match status" value="1"/>
</dbReference>
<dbReference type="FunFam" id="2.40.10.170:FF:000002">
    <property type="entry name" value="ATP synthase subunit beta, chloroplastic"/>
    <property type="match status" value="1"/>
</dbReference>
<dbReference type="Gene3D" id="2.40.10.170">
    <property type="match status" value="1"/>
</dbReference>
<dbReference type="Gene3D" id="1.10.1140.10">
    <property type="entry name" value="Bovine Mitochondrial F1-atpase, Atp Synthase Beta Chain, Chain D, domain 3"/>
    <property type="match status" value="1"/>
</dbReference>
<dbReference type="Gene3D" id="3.40.50.300">
    <property type="entry name" value="P-loop containing nucleotide triphosphate hydrolases"/>
    <property type="match status" value="1"/>
</dbReference>
<dbReference type="HAMAP" id="MF_01347">
    <property type="entry name" value="ATP_synth_beta_bact"/>
    <property type="match status" value="1"/>
</dbReference>
<dbReference type="InterPro" id="IPR003593">
    <property type="entry name" value="AAA+_ATPase"/>
</dbReference>
<dbReference type="InterPro" id="IPR055190">
    <property type="entry name" value="ATP-synt_VA_C"/>
</dbReference>
<dbReference type="InterPro" id="IPR005722">
    <property type="entry name" value="ATP_synth_F1_bsu"/>
</dbReference>
<dbReference type="InterPro" id="IPR020003">
    <property type="entry name" value="ATPase_a/bsu_AS"/>
</dbReference>
<dbReference type="InterPro" id="IPR050053">
    <property type="entry name" value="ATPase_alpha/beta_chains"/>
</dbReference>
<dbReference type="InterPro" id="IPR004100">
    <property type="entry name" value="ATPase_F1/V1/A1_a/bsu_N"/>
</dbReference>
<dbReference type="InterPro" id="IPR036121">
    <property type="entry name" value="ATPase_F1/V1/A1_a/bsu_N_sf"/>
</dbReference>
<dbReference type="InterPro" id="IPR000194">
    <property type="entry name" value="ATPase_F1/V1/A1_a/bsu_nucl-bd"/>
</dbReference>
<dbReference type="InterPro" id="IPR024034">
    <property type="entry name" value="ATPase_F1/V1_b/a_C"/>
</dbReference>
<dbReference type="InterPro" id="IPR027417">
    <property type="entry name" value="P-loop_NTPase"/>
</dbReference>
<dbReference type="NCBIfam" id="TIGR01039">
    <property type="entry name" value="atpD"/>
    <property type="match status" value="1"/>
</dbReference>
<dbReference type="PANTHER" id="PTHR15184">
    <property type="entry name" value="ATP SYNTHASE"/>
    <property type="match status" value="1"/>
</dbReference>
<dbReference type="PANTHER" id="PTHR15184:SF71">
    <property type="entry name" value="ATP SYNTHASE SUBUNIT BETA, MITOCHONDRIAL"/>
    <property type="match status" value="1"/>
</dbReference>
<dbReference type="Pfam" id="PF00006">
    <property type="entry name" value="ATP-synt_ab"/>
    <property type="match status" value="1"/>
</dbReference>
<dbReference type="Pfam" id="PF02874">
    <property type="entry name" value="ATP-synt_ab_N"/>
    <property type="match status" value="1"/>
</dbReference>
<dbReference type="Pfam" id="PF22919">
    <property type="entry name" value="ATP-synt_VA_C"/>
    <property type="match status" value="1"/>
</dbReference>
<dbReference type="SMART" id="SM00382">
    <property type="entry name" value="AAA"/>
    <property type="match status" value="1"/>
</dbReference>
<dbReference type="SUPFAM" id="SSF47917">
    <property type="entry name" value="C-terminal domain of alpha and beta subunits of F1 ATP synthase"/>
    <property type="match status" value="1"/>
</dbReference>
<dbReference type="SUPFAM" id="SSF50615">
    <property type="entry name" value="N-terminal domain of alpha and beta subunits of F1 ATP synthase"/>
    <property type="match status" value="1"/>
</dbReference>
<dbReference type="SUPFAM" id="SSF52540">
    <property type="entry name" value="P-loop containing nucleoside triphosphate hydrolases"/>
    <property type="match status" value="1"/>
</dbReference>
<dbReference type="PROSITE" id="PS00152">
    <property type="entry name" value="ATPASE_ALPHA_BETA"/>
    <property type="match status" value="1"/>
</dbReference>